<feature type="chain" id="PRO_1000133650" description="Succinylglutamate desuccinylase">
    <location>
        <begin position="1"/>
        <end position="330"/>
    </location>
</feature>
<feature type="active site" evidence="1">
    <location>
        <position position="210"/>
    </location>
</feature>
<feature type="binding site" evidence="1">
    <location>
        <position position="53"/>
    </location>
    <ligand>
        <name>Zn(2+)</name>
        <dbReference type="ChEBI" id="CHEBI:29105"/>
    </ligand>
</feature>
<feature type="binding site" evidence="1">
    <location>
        <position position="56"/>
    </location>
    <ligand>
        <name>Zn(2+)</name>
        <dbReference type="ChEBI" id="CHEBI:29105"/>
    </ligand>
</feature>
<feature type="binding site" evidence="1">
    <location>
        <position position="147"/>
    </location>
    <ligand>
        <name>Zn(2+)</name>
        <dbReference type="ChEBI" id="CHEBI:29105"/>
    </ligand>
</feature>
<dbReference type="EC" id="3.5.1.96" evidence="1"/>
<dbReference type="EMBL" id="CP000901">
    <property type="protein sequence ID" value="ABX87697.1"/>
    <property type="molecule type" value="Genomic_DNA"/>
</dbReference>
<dbReference type="RefSeq" id="WP_002212028.1">
    <property type="nucleotide sequence ID" value="NZ_CP009935.1"/>
</dbReference>
<dbReference type="SMR" id="A9QZ59"/>
<dbReference type="GeneID" id="49786048"/>
<dbReference type="KEGG" id="ypg:YpAngola_A2516"/>
<dbReference type="PATRIC" id="fig|349746.12.peg.3535"/>
<dbReference type="UniPathway" id="UPA00185">
    <property type="reaction ID" value="UER00283"/>
</dbReference>
<dbReference type="GO" id="GO:0016788">
    <property type="term" value="F:hydrolase activity, acting on ester bonds"/>
    <property type="evidence" value="ECO:0007669"/>
    <property type="project" value="UniProtKB-UniRule"/>
</dbReference>
<dbReference type="GO" id="GO:0009017">
    <property type="term" value="F:succinylglutamate desuccinylase activity"/>
    <property type="evidence" value="ECO:0007669"/>
    <property type="project" value="UniProtKB-EC"/>
</dbReference>
<dbReference type="GO" id="GO:0008270">
    <property type="term" value="F:zinc ion binding"/>
    <property type="evidence" value="ECO:0007669"/>
    <property type="project" value="UniProtKB-UniRule"/>
</dbReference>
<dbReference type="GO" id="GO:0019544">
    <property type="term" value="P:arginine catabolic process to glutamate"/>
    <property type="evidence" value="ECO:0007669"/>
    <property type="project" value="UniProtKB-UniRule"/>
</dbReference>
<dbReference type="GO" id="GO:0019545">
    <property type="term" value="P:arginine catabolic process to succinate"/>
    <property type="evidence" value="ECO:0007669"/>
    <property type="project" value="UniProtKB-UniRule"/>
</dbReference>
<dbReference type="CDD" id="cd03855">
    <property type="entry name" value="M14_ASTE"/>
    <property type="match status" value="1"/>
</dbReference>
<dbReference type="FunFam" id="3.40.630.10:FF:000017">
    <property type="entry name" value="Succinylglutamate desuccinylase"/>
    <property type="match status" value="1"/>
</dbReference>
<dbReference type="Gene3D" id="3.40.630.10">
    <property type="entry name" value="Zn peptidases"/>
    <property type="match status" value="1"/>
</dbReference>
<dbReference type="HAMAP" id="MF_00767">
    <property type="entry name" value="Arg_catab_AstE"/>
    <property type="match status" value="1"/>
</dbReference>
<dbReference type="InterPro" id="IPR050178">
    <property type="entry name" value="AspA/AstE_fam"/>
</dbReference>
<dbReference type="InterPro" id="IPR055438">
    <property type="entry name" value="AstE_AspA_cat"/>
</dbReference>
<dbReference type="InterPro" id="IPR007036">
    <property type="entry name" value="Aste_AspA_hybrid_dom"/>
</dbReference>
<dbReference type="InterPro" id="IPR016681">
    <property type="entry name" value="SuccinylGlu_desuccinylase"/>
</dbReference>
<dbReference type="NCBIfam" id="TIGR03242">
    <property type="entry name" value="arg_catab_astE"/>
    <property type="match status" value="1"/>
</dbReference>
<dbReference type="NCBIfam" id="NF003706">
    <property type="entry name" value="PRK05324.1"/>
    <property type="match status" value="1"/>
</dbReference>
<dbReference type="PANTHER" id="PTHR15162">
    <property type="entry name" value="ASPARTOACYLASE"/>
    <property type="match status" value="1"/>
</dbReference>
<dbReference type="PANTHER" id="PTHR15162:SF7">
    <property type="entry name" value="SUCCINYLGLUTAMATE DESUCCINYLASE"/>
    <property type="match status" value="1"/>
</dbReference>
<dbReference type="Pfam" id="PF24827">
    <property type="entry name" value="AstE_AspA_cat"/>
    <property type="match status" value="1"/>
</dbReference>
<dbReference type="Pfam" id="PF04952">
    <property type="entry name" value="AstE_AspA_hybrid"/>
    <property type="match status" value="1"/>
</dbReference>
<dbReference type="PIRSF" id="PIRSF017020">
    <property type="entry name" value="AstE"/>
    <property type="match status" value="1"/>
</dbReference>
<dbReference type="SUPFAM" id="SSF53187">
    <property type="entry name" value="Zn-dependent exopeptidases"/>
    <property type="match status" value="1"/>
</dbReference>
<sequence length="330" mass="37268">MLDFLAITLSGKPPQVIQGETVNLKWQWLGEGILTLVPHRSYTQSVVISAGIHGNETAPIEILNQLVTDLLAGQLPLSVRLLVLLGNPPAIRKGKRYLSNDINRMFGGRYQHYTPSDETRRASTLEQRVMAFFQASHTSERLHYDLHTAIRGSYHPRFGLLPYQQTPYSAAMFRWLRDIELDALVMHTSAGGTFAHFSSERCQAASCTLELGKALPFGENQLSQFSAITQGLRSLVSDSALPARKTENMKYYRVVKSLLRQHPDFKLRVAEDTVNFTRFAQGTLLTEQPNDNYRVEHPYEWILFPNPHVALGLRAGMMLVKMCESELPIT</sequence>
<evidence type="ECO:0000255" key="1">
    <source>
        <dbReference type="HAMAP-Rule" id="MF_00767"/>
    </source>
</evidence>
<keyword id="KW-0056">Arginine metabolism</keyword>
<keyword id="KW-0378">Hydrolase</keyword>
<keyword id="KW-0479">Metal-binding</keyword>
<keyword id="KW-0862">Zinc</keyword>
<reference key="1">
    <citation type="journal article" date="2010" name="J. Bacteriol.">
        <title>Genome sequence of the deep-rooted Yersinia pestis strain Angola reveals new insights into the evolution and pangenome of the plague bacterium.</title>
        <authorList>
            <person name="Eppinger M."/>
            <person name="Worsham P.L."/>
            <person name="Nikolich M.P."/>
            <person name="Riley D.R."/>
            <person name="Sebastian Y."/>
            <person name="Mou S."/>
            <person name="Achtman M."/>
            <person name="Lindler L.E."/>
            <person name="Ravel J."/>
        </authorList>
    </citation>
    <scope>NUCLEOTIDE SEQUENCE [LARGE SCALE GENOMIC DNA]</scope>
    <source>
        <strain>Angola</strain>
    </source>
</reference>
<proteinExistence type="inferred from homology"/>
<organism>
    <name type="scientific">Yersinia pestis bv. Antiqua (strain Angola)</name>
    <dbReference type="NCBI Taxonomy" id="349746"/>
    <lineage>
        <taxon>Bacteria</taxon>
        <taxon>Pseudomonadati</taxon>
        <taxon>Pseudomonadota</taxon>
        <taxon>Gammaproteobacteria</taxon>
        <taxon>Enterobacterales</taxon>
        <taxon>Yersiniaceae</taxon>
        <taxon>Yersinia</taxon>
    </lineage>
</organism>
<name>ASTE_YERPG</name>
<protein>
    <recommendedName>
        <fullName evidence="1">Succinylglutamate desuccinylase</fullName>
        <ecNumber evidence="1">3.5.1.96</ecNumber>
    </recommendedName>
</protein>
<comment type="function">
    <text evidence="1">Transforms N(2)-succinylglutamate into succinate and glutamate.</text>
</comment>
<comment type="catalytic activity">
    <reaction evidence="1">
        <text>N-succinyl-L-glutamate + H2O = L-glutamate + succinate</text>
        <dbReference type="Rhea" id="RHEA:15169"/>
        <dbReference type="ChEBI" id="CHEBI:15377"/>
        <dbReference type="ChEBI" id="CHEBI:29985"/>
        <dbReference type="ChEBI" id="CHEBI:30031"/>
        <dbReference type="ChEBI" id="CHEBI:58763"/>
        <dbReference type="EC" id="3.5.1.96"/>
    </reaction>
</comment>
<comment type="cofactor">
    <cofactor evidence="1">
        <name>Zn(2+)</name>
        <dbReference type="ChEBI" id="CHEBI:29105"/>
    </cofactor>
    <text evidence="1">Binds 1 zinc ion per subunit.</text>
</comment>
<comment type="pathway">
    <text evidence="1">Amino-acid degradation; L-arginine degradation via AST pathway; L-glutamate and succinate from L-arginine: step 5/5.</text>
</comment>
<comment type="similarity">
    <text evidence="1">Belongs to the AspA/AstE family. Succinylglutamate desuccinylase subfamily.</text>
</comment>
<accession>A9QZ59</accession>
<gene>
    <name evidence="1" type="primary">astE</name>
    <name type="ordered locus">YpAngola_A2516</name>
</gene>